<dbReference type="EMBL" id="AJ235273">
    <property type="protein sequence ID" value="CAA15191.1"/>
    <property type="molecule type" value="Genomic_DNA"/>
</dbReference>
<dbReference type="PIR" id="G71636">
    <property type="entry name" value="G71636"/>
</dbReference>
<dbReference type="RefSeq" id="NP_221115.2">
    <property type="nucleotide sequence ID" value="NC_000963.1"/>
</dbReference>
<dbReference type="PDB" id="2LOL">
    <property type="method" value="NMR"/>
    <property type="chains" value="A=6-86"/>
</dbReference>
<dbReference type="PDBsum" id="2LOL"/>
<dbReference type="SMR" id="Q9ZCH9"/>
<dbReference type="STRING" id="272947.gene:17555833"/>
<dbReference type="EnsemblBacteria" id="CAA15191">
    <property type="protein sequence ID" value="CAA15191"/>
    <property type="gene ID" value="CAA15191"/>
</dbReference>
<dbReference type="KEGG" id="rpr:RP763"/>
<dbReference type="PATRIC" id="fig|272947.5.peg.799"/>
<dbReference type="eggNOG" id="COG0236">
    <property type="taxonomic scope" value="Bacteria"/>
</dbReference>
<dbReference type="HOGENOM" id="CLU_108696_5_6_5"/>
<dbReference type="OrthoDB" id="9804551at2"/>
<dbReference type="UniPathway" id="UPA00094"/>
<dbReference type="EvolutionaryTrace" id="Q9ZCH9"/>
<dbReference type="Proteomes" id="UP000002480">
    <property type="component" value="Chromosome"/>
</dbReference>
<dbReference type="GO" id="GO:0005829">
    <property type="term" value="C:cytosol"/>
    <property type="evidence" value="ECO:0007669"/>
    <property type="project" value="TreeGrafter"/>
</dbReference>
<dbReference type="GO" id="GO:0016020">
    <property type="term" value="C:membrane"/>
    <property type="evidence" value="ECO:0007669"/>
    <property type="project" value="GOC"/>
</dbReference>
<dbReference type="GO" id="GO:0000035">
    <property type="term" value="F:acyl binding"/>
    <property type="evidence" value="ECO:0007669"/>
    <property type="project" value="TreeGrafter"/>
</dbReference>
<dbReference type="GO" id="GO:0000036">
    <property type="term" value="F:acyl carrier activity"/>
    <property type="evidence" value="ECO:0007669"/>
    <property type="project" value="UniProtKB-UniRule"/>
</dbReference>
<dbReference type="GO" id="GO:0009245">
    <property type="term" value="P:lipid A biosynthetic process"/>
    <property type="evidence" value="ECO:0007669"/>
    <property type="project" value="TreeGrafter"/>
</dbReference>
<dbReference type="Gene3D" id="1.10.1200.10">
    <property type="entry name" value="ACP-like"/>
    <property type="match status" value="1"/>
</dbReference>
<dbReference type="HAMAP" id="MF_01217">
    <property type="entry name" value="Acyl_carrier"/>
    <property type="match status" value="1"/>
</dbReference>
<dbReference type="InterPro" id="IPR003231">
    <property type="entry name" value="ACP"/>
</dbReference>
<dbReference type="InterPro" id="IPR036736">
    <property type="entry name" value="ACP-like_sf"/>
</dbReference>
<dbReference type="InterPro" id="IPR009081">
    <property type="entry name" value="PP-bd_ACP"/>
</dbReference>
<dbReference type="NCBIfam" id="TIGR00517">
    <property type="entry name" value="acyl_carrier"/>
    <property type="match status" value="1"/>
</dbReference>
<dbReference type="NCBIfam" id="NF002148">
    <property type="entry name" value="PRK00982.1-2"/>
    <property type="match status" value="1"/>
</dbReference>
<dbReference type="NCBIfam" id="NF002150">
    <property type="entry name" value="PRK00982.1-4"/>
    <property type="match status" value="1"/>
</dbReference>
<dbReference type="PANTHER" id="PTHR20863">
    <property type="entry name" value="ACYL CARRIER PROTEIN"/>
    <property type="match status" value="1"/>
</dbReference>
<dbReference type="PANTHER" id="PTHR20863:SF76">
    <property type="entry name" value="CARRIER DOMAIN-CONTAINING PROTEIN"/>
    <property type="match status" value="1"/>
</dbReference>
<dbReference type="Pfam" id="PF00550">
    <property type="entry name" value="PP-binding"/>
    <property type="match status" value="1"/>
</dbReference>
<dbReference type="SUPFAM" id="SSF47336">
    <property type="entry name" value="ACP-like"/>
    <property type="match status" value="1"/>
</dbReference>
<dbReference type="PROSITE" id="PS50075">
    <property type="entry name" value="CARRIER"/>
    <property type="match status" value="1"/>
</dbReference>
<evidence type="ECO:0000255" key="1">
    <source>
        <dbReference type="HAMAP-Rule" id="MF_01217"/>
    </source>
</evidence>
<evidence type="ECO:0000255" key="2">
    <source>
        <dbReference type="PROSITE-ProRule" id="PRU00258"/>
    </source>
</evidence>
<evidence type="ECO:0007829" key="3">
    <source>
        <dbReference type="PDB" id="2LOL"/>
    </source>
</evidence>
<sequence>MEFKIMSTTDKIEQKVIEMVAEKLNKDKAIITTDSRFIEDLKADSLDTVELMMAIEVEYGIDIPDDEATKIKTVSDVIKYIKERQS</sequence>
<comment type="function">
    <text evidence="1">Carrier of the growing fatty acid chain in fatty acid biosynthesis.</text>
</comment>
<comment type="pathway">
    <text evidence="1">Lipid metabolism; fatty acid biosynthesis.</text>
</comment>
<comment type="subcellular location">
    <subcellularLocation>
        <location evidence="1">Cytoplasm</location>
    </subcellularLocation>
</comment>
<comment type="PTM">
    <text evidence="1">4'-phosphopantetheine is transferred from CoA to a specific serine of apo-ACP by AcpS. This modification is essential for activity because fatty acids are bound in thioester linkage to the sulfhydryl of the prosthetic group.</text>
</comment>
<comment type="similarity">
    <text evidence="1">Belongs to the acyl carrier protein (ACP) family.</text>
</comment>
<proteinExistence type="evidence at protein level"/>
<name>ACP_RICPR</name>
<gene>
    <name evidence="1" type="primary">acpP</name>
    <name type="ordered locus">RP763</name>
</gene>
<reference key="1">
    <citation type="journal article" date="1998" name="Nature">
        <title>The genome sequence of Rickettsia prowazekii and the origin of mitochondria.</title>
        <authorList>
            <person name="Andersson S.G.E."/>
            <person name="Zomorodipour A."/>
            <person name="Andersson J.O."/>
            <person name="Sicheritz-Ponten T."/>
            <person name="Alsmark U.C.M."/>
            <person name="Podowski R.M."/>
            <person name="Naeslund A.K."/>
            <person name="Eriksson A.-S."/>
            <person name="Winkler H.H."/>
            <person name="Kurland C.G."/>
        </authorList>
    </citation>
    <scope>NUCLEOTIDE SEQUENCE [LARGE SCALE GENOMIC DNA]</scope>
    <source>
        <strain>Madrid E</strain>
    </source>
</reference>
<organism>
    <name type="scientific">Rickettsia prowazekii (strain Madrid E)</name>
    <dbReference type="NCBI Taxonomy" id="272947"/>
    <lineage>
        <taxon>Bacteria</taxon>
        <taxon>Pseudomonadati</taxon>
        <taxon>Pseudomonadota</taxon>
        <taxon>Alphaproteobacteria</taxon>
        <taxon>Rickettsiales</taxon>
        <taxon>Rickettsiaceae</taxon>
        <taxon>Rickettsieae</taxon>
        <taxon>Rickettsia</taxon>
        <taxon>typhus group</taxon>
    </lineage>
</organism>
<accession>Q9ZCH9</accession>
<protein>
    <recommendedName>
        <fullName evidence="1">Acyl carrier protein</fullName>
        <shortName evidence="1">ACP</shortName>
    </recommendedName>
</protein>
<keyword id="KW-0002">3D-structure</keyword>
<keyword id="KW-0963">Cytoplasm</keyword>
<keyword id="KW-0275">Fatty acid biosynthesis</keyword>
<keyword id="KW-0276">Fatty acid metabolism</keyword>
<keyword id="KW-0444">Lipid biosynthesis</keyword>
<keyword id="KW-0443">Lipid metabolism</keyword>
<keyword id="KW-0596">Phosphopantetheine</keyword>
<keyword id="KW-0597">Phosphoprotein</keyword>
<keyword id="KW-1185">Reference proteome</keyword>
<feature type="chain" id="PRO_0000180180" description="Acyl carrier protein">
    <location>
        <begin position="1"/>
        <end position="86"/>
    </location>
</feature>
<feature type="domain" description="Carrier" evidence="2">
    <location>
        <begin position="10"/>
        <end position="85"/>
    </location>
</feature>
<feature type="modified residue" description="O-(pantetheine 4'-phosphoryl)serine" evidence="2">
    <location>
        <position position="45"/>
    </location>
</feature>
<feature type="helix" evidence="3">
    <location>
        <begin position="9"/>
        <end position="23"/>
    </location>
</feature>
<feature type="turn" evidence="3">
    <location>
        <begin position="28"/>
        <end position="30"/>
    </location>
</feature>
<feature type="helix" evidence="3">
    <location>
        <begin position="37"/>
        <end position="40"/>
    </location>
</feature>
<feature type="helix" evidence="3">
    <location>
        <begin position="45"/>
        <end position="59"/>
    </location>
</feature>
<feature type="helix" evidence="3">
    <location>
        <begin position="65"/>
        <end position="70"/>
    </location>
</feature>
<feature type="strand" evidence="3">
    <location>
        <begin position="71"/>
        <end position="73"/>
    </location>
</feature>
<feature type="helix" evidence="3">
    <location>
        <begin position="74"/>
        <end position="84"/>
    </location>
</feature>